<evidence type="ECO:0000255" key="1">
    <source>
        <dbReference type="HAMAP-Rule" id="MF_00141"/>
    </source>
</evidence>
<reference key="1">
    <citation type="journal article" date="2012" name="BMC Microbiol.">
        <title>Genome sequence of Desulfitobacterium hafniense DCB-2, a Gram-positive anaerobe capable of dehalogenation and metal reduction.</title>
        <authorList>
            <person name="Kim S.H."/>
            <person name="Harzman C."/>
            <person name="Davis J.K."/>
            <person name="Hutcheson R."/>
            <person name="Broderick J.B."/>
            <person name="Marsh T.L."/>
            <person name="Tiedje J.M."/>
        </authorList>
    </citation>
    <scope>NUCLEOTIDE SEQUENCE [LARGE SCALE GENOMIC DNA]</scope>
    <source>
        <strain>DSM 10664 / DCB-2</strain>
    </source>
</reference>
<feature type="chain" id="PRO_1000123006" description="Elongation factor P">
    <location>
        <begin position="1"/>
        <end position="185"/>
    </location>
</feature>
<keyword id="KW-0963">Cytoplasm</keyword>
<keyword id="KW-0251">Elongation factor</keyword>
<keyword id="KW-0648">Protein biosynthesis</keyword>
<comment type="function">
    <text evidence="1">Involved in peptide bond synthesis. Stimulates efficient translation and peptide-bond synthesis on native or reconstituted 70S ribosomes in vitro. Probably functions indirectly by altering the affinity of the ribosome for aminoacyl-tRNA, thus increasing their reactivity as acceptors for peptidyl transferase.</text>
</comment>
<comment type="pathway">
    <text evidence="1">Protein biosynthesis; polypeptide chain elongation.</text>
</comment>
<comment type="subcellular location">
    <subcellularLocation>
        <location evidence="1">Cytoplasm</location>
    </subcellularLocation>
</comment>
<comment type="similarity">
    <text evidence="1">Belongs to the elongation factor P family.</text>
</comment>
<dbReference type="EMBL" id="CP001336">
    <property type="protein sequence ID" value="ACL21537.1"/>
    <property type="molecule type" value="Genomic_DNA"/>
</dbReference>
<dbReference type="RefSeq" id="WP_015944633.1">
    <property type="nucleotide sequence ID" value="NC_011830.1"/>
</dbReference>
<dbReference type="SMR" id="B8FQ76"/>
<dbReference type="KEGG" id="dhd:Dhaf_3519"/>
<dbReference type="HOGENOM" id="CLU_074944_0_1_9"/>
<dbReference type="UniPathway" id="UPA00345"/>
<dbReference type="Proteomes" id="UP000007726">
    <property type="component" value="Chromosome"/>
</dbReference>
<dbReference type="GO" id="GO:0005737">
    <property type="term" value="C:cytoplasm"/>
    <property type="evidence" value="ECO:0007669"/>
    <property type="project" value="UniProtKB-SubCell"/>
</dbReference>
<dbReference type="GO" id="GO:0003746">
    <property type="term" value="F:translation elongation factor activity"/>
    <property type="evidence" value="ECO:0007669"/>
    <property type="project" value="UniProtKB-UniRule"/>
</dbReference>
<dbReference type="GO" id="GO:0043043">
    <property type="term" value="P:peptide biosynthetic process"/>
    <property type="evidence" value="ECO:0007669"/>
    <property type="project" value="InterPro"/>
</dbReference>
<dbReference type="CDD" id="cd04470">
    <property type="entry name" value="S1_EF-P_repeat_1"/>
    <property type="match status" value="1"/>
</dbReference>
<dbReference type="CDD" id="cd05794">
    <property type="entry name" value="S1_EF-P_repeat_2"/>
    <property type="match status" value="1"/>
</dbReference>
<dbReference type="FunFam" id="2.30.30.30:FF:000003">
    <property type="entry name" value="Elongation factor P"/>
    <property type="match status" value="1"/>
</dbReference>
<dbReference type="FunFam" id="2.40.50.140:FF:000004">
    <property type="entry name" value="Elongation factor P"/>
    <property type="match status" value="1"/>
</dbReference>
<dbReference type="FunFam" id="2.40.50.140:FF:000009">
    <property type="entry name" value="Elongation factor P"/>
    <property type="match status" value="1"/>
</dbReference>
<dbReference type="Gene3D" id="2.30.30.30">
    <property type="match status" value="1"/>
</dbReference>
<dbReference type="Gene3D" id="2.40.50.140">
    <property type="entry name" value="Nucleic acid-binding proteins"/>
    <property type="match status" value="2"/>
</dbReference>
<dbReference type="HAMAP" id="MF_00141">
    <property type="entry name" value="EF_P"/>
    <property type="match status" value="1"/>
</dbReference>
<dbReference type="InterPro" id="IPR015365">
    <property type="entry name" value="Elong-fact-P_C"/>
</dbReference>
<dbReference type="InterPro" id="IPR012340">
    <property type="entry name" value="NA-bd_OB-fold"/>
</dbReference>
<dbReference type="InterPro" id="IPR014722">
    <property type="entry name" value="Rib_uL2_dom2"/>
</dbReference>
<dbReference type="InterPro" id="IPR020599">
    <property type="entry name" value="Transl_elong_fac_P/YeiP"/>
</dbReference>
<dbReference type="InterPro" id="IPR013185">
    <property type="entry name" value="Transl_elong_KOW-like"/>
</dbReference>
<dbReference type="InterPro" id="IPR001059">
    <property type="entry name" value="Transl_elong_P/YeiP_cen"/>
</dbReference>
<dbReference type="InterPro" id="IPR013852">
    <property type="entry name" value="Transl_elong_P/YeiP_CS"/>
</dbReference>
<dbReference type="InterPro" id="IPR011768">
    <property type="entry name" value="Transl_elongation_fac_P"/>
</dbReference>
<dbReference type="InterPro" id="IPR008991">
    <property type="entry name" value="Translation_prot_SH3-like_sf"/>
</dbReference>
<dbReference type="NCBIfam" id="TIGR00038">
    <property type="entry name" value="efp"/>
    <property type="match status" value="1"/>
</dbReference>
<dbReference type="NCBIfam" id="NF001810">
    <property type="entry name" value="PRK00529.1"/>
    <property type="match status" value="1"/>
</dbReference>
<dbReference type="PANTHER" id="PTHR30053">
    <property type="entry name" value="ELONGATION FACTOR P"/>
    <property type="match status" value="1"/>
</dbReference>
<dbReference type="PANTHER" id="PTHR30053:SF12">
    <property type="entry name" value="ELONGATION FACTOR P (EF-P) FAMILY PROTEIN"/>
    <property type="match status" value="1"/>
</dbReference>
<dbReference type="Pfam" id="PF01132">
    <property type="entry name" value="EFP"/>
    <property type="match status" value="1"/>
</dbReference>
<dbReference type="Pfam" id="PF08207">
    <property type="entry name" value="EFP_N"/>
    <property type="match status" value="1"/>
</dbReference>
<dbReference type="Pfam" id="PF09285">
    <property type="entry name" value="Elong-fact-P_C"/>
    <property type="match status" value="1"/>
</dbReference>
<dbReference type="PIRSF" id="PIRSF005901">
    <property type="entry name" value="EF-P"/>
    <property type="match status" value="1"/>
</dbReference>
<dbReference type="SMART" id="SM01185">
    <property type="entry name" value="EFP"/>
    <property type="match status" value="1"/>
</dbReference>
<dbReference type="SMART" id="SM00841">
    <property type="entry name" value="Elong-fact-P_C"/>
    <property type="match status" value="1"/>
</dbReference>
<dbReference type="SUPFAM" id="SSF50249">
    <property type="entry name" value="Nucleic acid-binding proteins"/>
    <property type="match status" value="2"/>
</dbReference>
<dbReference type="SUPFAM" id="SSF50104">
    <property type="entry name" value="Translation proteins SH3-like domain"/>
    <property type="match status" value="1"/>
</dbReference>
<dbReference type="PROSITE" id="PS01275">
    <property type="entry name" value="EFP"/>
    <property type="match status" value="1"/>
</dbReference>
<gene>
    <name evidence="1" type="primary">efp</name>
    <name type="ordered locus">Dhaf_3519</name>
</gene>
<accession>B8FQ76</accession>
<proteinExistence type="inferred from homology"/>
<sequence length="185" mass="20410">MISSNEFKTGLTIEVDNDVYTIIEFQHVKPGKGAAFVRTKLKNVKTGGIIERKFNAGEKVPKAHVERREMQYLYKDGDHFVAMDNETYEQTSLTEAQIGDGVKYLKENMNLGILFFNGTVIGVDLPNTVILEVAHTEPGVRGDTATGGSKPATLETGAVVQVPFFVNEGEKLIIDTRTGNYVQRA</sequence>
<organism>
    <name type="scientific">Desulfitobacterium hafniense (strain DSM 10664 / DCB-2)</name>
    <dbReference type="NCBI Taxonomy" id="272564"/>
    <lineage>
        <taxon>Bacteria</taxon>
        <taxon>Bacillati</taxon>
        <taxon>Bacillota</taxon>
        <taxon>Clostridia</taxon>
        <taxon>Eubacteriales</taxon>
        <taxon>Desulfitobacteriaceae</taxon>
        <taxon>Desulfitobacterium</taxon>
    </lineage>
</organism>
<protein>
    <recommendedName>
        <fullName evidence="1">Elongation factor P</fullName>
        <shortName evidence="1">EF-P</shortName>
    </recommendedName>
</protein>
<name>EFP_DESHD</name>